<protein>
    <recommendedName>
        <fullName evidence="1">ATP synthase subunit beta, chloroplastic</fullName>
        <ecNumber evidence="1">7.1.2.2</ecNumber>
    </recommendedName>
    <alternativeName>
        <fullName evidence="1">ATP synthase F1 sector subunit beta</fullName>
    </alternativeName>
    <alternativeName>
        <fullName evidence="1">F-ATPase subunit beta</fullName>
    </alternativeName>
</protein>
<geneLocation type="chloroplast"/>
<name>ATPB_EUGGR</name>
<feature type="chain" id="PRO_0000144513" description="ATP synthase subunit beta, chloroplastic">
    <location>
        <begin position="1"/>
        <end position="480"/>
    </location>
</feature>
<feature type="binding site" evidence="1">
    <location>
        <begin position="161"/>
        <end position="168"/>
    </location>
    <ligand>
        <name>ATP</name>
        <dbReference type="ChEBI" id="CHEBI:30616"/>
    </ligand>
</feature>
<evidence type="ECO:0000255" key="1">
    <source>
        <dbReference type="HAMAP-Rule" id="MF_01347"/>
    </source>
</evidence>
<dbReference type="EC" id="7.1.2.2" evidence="1"/>
<dbReference type="EMBL" id="X70810">
    <property type="protein sequence ID" value="CAA50128.1"/>
    <property type="molecule type" value="Genomic_DNA"/>
</dbReference>
<dbReference type="PIR" id="S34914">
    <property type="entry name" value="S34547"/>
</dbReference>
<dbReference type="RefSeq" id="NP_041941.1">
    <property type="nucleotide sequence ID" value="NC_001603.2"/>
</dbReference>
<dbReference type="SMR" id="P31476"/>
<dbReference type="GeneID" id="807493"/>
<dbReference type="GO" id="GO:0009535">
    <property type="term" value="C:chloroplast thylakoid membrane"/>
    <property type="evidence" value="ECO:0007669"/>
    <property type="project" value="UniProtKB-SubCell"/>
</dbReference>
<dbReference type="GO" id="GO:0005739">
    <property type="term" value="C:mitochondrion"/>
    <property type="evidence" value="ECO:0007669"/>
    <property type="project" value="GOC"/>
</dbReference>
<dbReference type="GO" id="GO:0045259">
    <property type="term" value="C:proton-transporting ATP synthase complex"/>
    <property type="evidence" value="ECO:0007669"/>
    <property type="project" value="UniProtKB-KW"/>
</dbReference>
<dbReference type="GO" id="GO:0005524">
    <property type="term" value="F:ATP binding"/>
    <property type="evidence" value="ECO:0007669"/>
    <property type="project" value="UniProtKB-UniRule"/>
</dbReference>
<dbReference type="GO" id="GO:0016887">
    <property type="term" value="F:ATP hydrolysis activity"/>
    <property type="evidence" value="ECO:0007669"/>
    <property type="project" value="InterPro"/>
</dbReference>
<dbReference type="GO" id="GO:0046933">
    <property type="term" value="F:proton-transporting ATP synthase activity, rotational mechanism"/>
    <property type="evidence" value="ECO:0007669"/>
    <property type="project" value="UniProtKB-UniRule"/>
</dbReference>
<dbReference type="GO" id="GO:0042776">
    <property type="term" value="P:proton motive force-driven mitochondrial ATP synthesis"/>
    <property type="evidence" value="ECO:0007669"/>
    <property type="project" value="TreeGrafter"/>
</dbReference>
<dbReference type="CDD" id="cd18110">
    <property type="entry name" value="ATP-synt_F1_beta_C"/>
    <property type="match status" value="1"/>
</dbReference>
<dbReference type="CDD" id="cd18115">
    <property type="entry name" value="ATP-synt_F1_beta_N"/>
    <property type="match status" value="1"/>
</dbReference>
<dbReference type="CDD" id="cd01133">
    <property type="entry name" value="F1-ATPase_beta_CD"/>
    <property type="match status" value="1"/>
</dbReference>
<dbReference type="FunFam" id="1.10.1140.10:FF:000001">
    <property type="entry name" value="ATP synthase subunit beta"/>
    <property type="match status" value="1"/>
</dbReference>
<dbReference type="FunFam" id="3.40.50.12240:FF:000006">
    <property type="entry name" value="ATP synthase subunit beta"/>
    <property type="match status" value="1"/>
</dbReference>
<dbReference type="FunFam" id="3.40.50.300:FF:000004">
    <property type="entry name" value="ATP synthase subunit beta"/>
    <property type="match status" value="1"/>
</dbReference>
<dbReference type="FunFam" id="2.40.10.170:FF:000002">
    <property type="entry name" value="ATP synthase subunit beta, chloroplastic"/>
    <property type="match status" value="1"/>
</dbReference>
<dbReference type="Gene3D" id="2.40.10.170">
    <property type="match status" value="1"/>
</dbReference>
<dbReference type="Gene3D" id="1.10.1140.10">
    <property type="entry name" value="Bovine Mitochondrial F1-atpase, Atp Synthase Beta Chain, Chain D, domain 3"/>
    <property type="match status" value="1"/>
</dbReference>
<dbReference type="Gene3D" id="3.40.50.300">
    <property type="entry name" value="P-loop containing nucleotide triphosphate hydrolases"/>
    <property type="match status" value="1"/>
</dbReference>
<dbReference type="HAMAP" id="MF_01347">
    <property type="entry name" value="ATP_synth_beta_bact"/>
    <property type="match status" value="1"/>
</dbReference>
<dbReference type="InterPro" id="IPR003593">
    <property type="entry name" value="AAA+_ATPase"/>
</dbReference>
<dbReference type="InterPro" id="IPR055190">
    <property type="entry name" value="ATP-synt_VA_C"/>
</dbReference>
<dbReference type="InterPro" id="IPR005722">
    <property type="entry name" value="ATP_synth_F1_bsu"/>
</dbReference>
<dbReference type="InterPro" id="IPR020003">
    <property type="entry name" value="ATPase_a/bsu_AS"/>
</dbReference>
<dbReference type="InterPro" id="IPR050053">
    <property type="entry name" value="ATPase_alpha/beta_chains"/>
</dbReference>
<dbReference type="InterPro" id="IPR004100">
    <property type="entry name" value="ATPase_F1/V1/A1_a/bsu_N"/>
</dbReference>
<dbReference type="InterPro" id="IPR036121">
    <property type="entry name" value="ATPase_F1/V1/A1_a/bsu_N_sf"/>
</dbReference>
<dbReference type="InterPro" id="IPR000194">
    <property type="entry name" value="ATPase_F1/V1/A1_a/bsu_nucl-bd"/>
</dbReference>
<dbReference type="InterPro" id="IPR024034">
    <property type="entry name" value="ATPase_F1/V1_b/a_C"/>
</dbReference>
<dbReference type="InterPro" id="IPR027417">
    <property type="entry name" value="P-loop_NTPase"/>
</dbReference>
<dbReference type="NCBIfam" id="TIGR01039">
    <property type="entry name" value="atpD"/>
    <property type="match status" value="1"/>
</dbReference>
<dbReference type="PANTHER" id="PTHR15184">
    <property type="entry name" value="ATP SYNTHASE"/>
    <property type="match status" value="1"/>
</dbReference>
<dbReference type="PANTHER" id="PTHR15184:SF71">
    <property type="entry name" value="ATP SYNTHASE SUBUNIT BETA, MITOCHONDRIAL"/>
    <property type="match status" value="1"/>
</dbReference>
<dbReference type="Pfam" id="PF00006">
    <property type="entry name" value="ATP-synt_ab"/>
    <property type="match status" value="1"/>
</dbReference>
<dbReference type="Pfam" id="PF02874">
    <property type="entry name" value="ATP-synt_ab_N"/>
    <property type="match status" value="1"/>
</dbReference>
<dbReference type="Pfam" id="PF22919">
    <property type="entry name" value="ATP-synt_VA_C"/>
    <property type="match status" value="1"/>
</dbReference>
<dbReference type="SMART" id="SM00382">
    <property type="entry name" value="AAA"/>
    <property type="match status" value="1"/>
</dbReference>
<dbReference type="SUPFAM" id="SSF47917">
    <property type="entry name" value="C-terminal domain of alpha and beta subunits of F1 ATP synthase"/>
    <property type="match status" value="1"/>
</dbReference>
<dbReference type="SUPFAM" id="SSF50615">
    <property type="entry name" value="N-terminal domain of alpha and beta subunits of F1 ATP synthase"/>
    <property type="match status" value="1"/>
</dbReference>
<dbReference type="SUPFAM" id="SSF52540">
    <property type="entry name" value="P-loop containing nucleoside triphosphate hydrolases"/>
    <property type="match status" value="1"/>
</dbReference>
<dbReference type="PROSITE" id="PS00152">
    <property type="entry name" value="ATPASE_ALPHA_BETA"/>
    <property type="match status" value="1"/>
</dbReference>
<gene>
    <name evidence="1" type="primary">atpB</name>
</gene>
<proteinExistence type="inferred from homology"/>
<organism>
    <name type="scientific">Euglena gracilis</name>
    <dbReference type="NCBI Taxonomy" id="3039"/>
    <lineage>
        <taxon>Eukaryota</taxon>
        <taxon>Discoba</taxon>
        <taxon>Euglenozoa</taxon>
        <taxon>Euglenida</taxon>
        <taxon>Spirocuta</taxon>
        <taxon>Euglenophyceae</taxon>
        <taxon>Euglenales</taxon>
        <taxon>Euglenaceae</taxon>
        <taxon>Euglena</taxon>
    </lineage>
</organism>
<reference key="1">
    <citation type="journal article" date="1994" name="Curr. Genet.">
        <title>Gene structure and expression of a novel Euglena gracilis chloroplast operon encoding cytochrome b6 and the beta and epsilon subunits of the H(+)-ATP synthase complex.</title>
        <authorList>
            <person name="Hong L."/>
            <person name="Hallick R.B."/>
        </authorList>
    </citation>
    <scope>NUCLEOTIDE SEQUENCE [GENOMIC DNA]</scope>
    <source>
        <strain>Z / UTEX 753</strain>
    </source>
</reference>
<reference key="2">
    <citation type="journal article" date="1993" name="Nucleic Acids Res.">
        <title>Complete sequence of Euglena gracilis chloroplast DNA.</title>
        <authorList>
            <person name="Hallick R.B."/>
            <person name="Hong L."/>
            <person name="Drager R.G."/>
            <person name="Favreau M.R."/>
            <person name="Monfort A."/>
            <person name="Orsat B."/>
            <person name="Spielmann A."/>
            <person name="Stutz E."/>
        </authorList>
    </citation>
    <scope>NUCLEOTIDE SEQUENCE [LARGE SCALE GENOMIC DNA]</scope>
    <source>
        <strain>Z / UTEX 753</strain>
    </source>
</reference>
<sequence>MKSSLRLNTGIILQIIGPVMDISFPSGKMPNIYNSLLIEGKTESGDRLKVVCEVQQLLGDNVVRAIAMSATDGLQRGIKVIDTGAPLSVPVGVTTLGRIFNVLGESVDKMGLIDYSITLPIHRAAPSFVELDTQLSIFETGIKVVDLLAPYRRGGKIGLFGGAGVGKTVLIMELINNIAKAHGGVSVFGGVGERTREGNDLYQEMKESGVINDRNFKESKVALIYGQMNEPPGARMRVGLTALTMAEYFRDVNKQDVLLFIDNIFRFVQAGSEVSALLGRMPSAVGYQPTLATEMGGLQERITSTKVGSITSIQAVYVPADDLTDPAPATTFAHLDATTVLSRNLASKGIYPAVDPLDSTSTMLQPWIVGEEHYNTAQSVKKTLQRYKELQDIIAILGLDELSEEDRLVVSRARKVERFLSQPFFVAEVFTGSPGKYVTLAETIEGFKAILSGDLDEVPEQAFYLVGNIEEVISKAIELQ</sequence>
<comment type="function">
    <text evidence="1">Produces ATP from ADP in the presence of a proton gradient across the membrane. The catalytic sites are hosted primarily by the beta subunits.</text>
</comment>
<comment type="catalytic activity">
    <reaction evidence="1">
        <text>ATP + H2O + 4 H(+)(in) = ADP + phosphate + 5 H(+)(out)</text>
        <dbReference type="Rhea" id="RHEA:57720"/>
        <dbReference type="ChEBI" id="CHEBI:15377"/>
        <dbReference type="ChEBI" id="CHEBI:15378"/>
        <dbReference type="ChEBI" id="CHEBI:30616"/>
        <dbReference type="ChEBI" id="CHEBI:43474"/>
        <dbReference type="ChEBI" id="CHEBI:456216"/>
        <dbReference type="EC" id="7.1.2.2"/>
    </reaction>
</comment>
<comment type="subunit">
    <text evidence="1">F-type ATPases have 2 components, CF(1) - the catalytic core - and CF(0) - the membrane proton channel. CF(1) has five subunits: alpha(3), beta(3), gamma(1), delta(1), epsilon(1). CF(0) has four main subunits: a(1), b(1), b'(1) and c(9-12).</text>
</comment>
<comment type="subcellular location">
    <subcellularLocation>
        <location evidence="1">Plastid</location>
        <location evidence="1">Chloroplast thylakoid membrane</location>
        <topology evidence="1">Peripheral membrane protein</topology>
    </subcellularLocation>
</comment>
<comment type="similarity">
    <text evidence="1">Belongs to the ATPase alpha/beta chains family.</text>
</comment>
<keyword id="KW-0066">ATP synthesis</keyword>
<keyword id="KW-0067">ATP-binding</keyword>
<keyword id="KW-0139">CF(1)</keyword>
<keyword id="KW-0150">Chloroplast</keyword>
<keyword id="KW-0375">Hydrogen ion transport</keyword>
<keyword id="KW-0406">Ion transport</keyword>
<keyword id="KW-0472">Membrane</keyword>
<keyword id="KW-0547">Nucleotide-binding</keyword>
<keyword id="KW-0934">Plastid</keyword>
<keyword id="KW-0793">Thylakoid</keyword>
<keyword id="KW-1278">Translocase</keyword>
<keyword id="KW-0813">Transport</keyword>
<accession>P31476</accession>